<sequence length="523" mass="55890">MQIREVILDGESLTIEQVLAVAYGQPGTPVVRLAPIARQRVERAAQAVQDLLARGVVAYGITTGFGAFKDRVIAPDQVERLQYNILVSHAVGVGPVFDIPTTRAIMLIRANTLARGHSGVRLQTVERLLDMLNQGIHPRIPCKGSLGASGDLAPLAHMALPLIGLGEVEWQGEVLPAATALERLGWQPLHLAAKEGLALTNGTAVMCALGVIETARAETLSATADIAGCLSLEALYGTPAAFDARLHALRPFPRQIECAAHLRRLLAGSTFVRNNDPRHVQDAYTLRCIPQVHGAVRDAIAYARWVFAIELNAVTDNPLLFVDDDGNVEVISGGNFHGEPLAIALDYLGLAVAELGNIAERRLMRLTDEASNTHVLPAFLTRAGGLNSGFMIVQYTAAALATENKVLAHPASVDSIPTSANVEDHVSMGVTAGLKLRSIIDNVSQILALELFAAAQGIDFRRQELGSQARLGRGTGPVYELIRQYVPFIAEDTLLHPYITIISELVAQGKIAAAAAVHDDADA</sequence>
<proteinExistence type="inferred from homology"/>
<feature type="chain" id="PRO_1000125093" description="Histidine ammonia-lyase">
    <location>
        <begin position="1"/>
        <end position="523"/>
    </location>
</feature>
<feature type="modified residue" description="2,3-didehydroalanine (Ser)" evidence="1">
    <location>
        <position position="149"/>
    </location>
</feature>
<feature type="cross-link" description="5-imidazolinone (Ala-Gly)" evidence="1">
    <location>
        <begin position="148"/>
        <end position="150"/>
    </location>
</feature>
<comment type="catalytic activity">
    <reaction evidence="1">
        <text>L-histidine = trans-urocanate + NH4(+)</text>
        <dbReference type="Rhea" id="RHEA:21232"/>
        <dbReference type="ChEBI" id="CHEBI:17771"/>
        <dbReference type="ChEBI" id="CHEBI:28938"/>
        <dbReference type="ChEBI" id="CHEBI:57595"/>
        <dbReference type="EC" id="4.3.1.3"/>
    </reaction>
</comment>
<comment type="pathway">
    <text evidence="1">Amino-acid degradation; L-histidine degradation into L-glutamate; N-formimidoyl-L-glutamate from L-histidine: step 1/3.</text>
</comment>
<comment type="subcellular location">
    <subcellularLocation>
        <location evidence="1">Cytoplasm</location>
    </subcellularLocation>
</comment>
<comment type="PTM">
    <text evidence="1">Contains an active site 4-methylidene-imidazol-5-one (MIO), which is formed autocatalytically by cyclization and dehydration of residues Ala-Ser-Gly.</text>
</comment>
<comment type="similarity">
    <text evidence="1">Belongs to the PAL/histidase family.</text>
</comment>
<protein>
    <recommendedName>
        <fullName evidence="1">Histidine ammonia-lyase</fullName>
        <shortName evidence="1">Histidase</shortName>
        <ecNumber evidence="1">4.3.1.3</ecNumber>
    </recommendedName>
</protein>
<name>HUTH_CHLSY</name>
<organism>
    <name type="scientific">Chloroflexus aurantiacus (strain ATCC 29364 / DSM 637 / Y-400-fl)</name>
    <dbReference type="NCBI Taxonomy" id="480224"/>
    <lineage>
        <taxon>Bacteria</taxon>
        <taxon>Bacillati</taxon>
        <taxon>Chloroflexota</taxon>
        <taxon>Chloroflexia</taxon>
        <taxon>Chloroflexales</taxon>
        <taxon>Chloroflexineae</taxon>
        <taxon>Chloroflexaceae</taxon>
        <taxon>Chloroflexus</taxon>
    </lineage>
</organism>
<dbReference type="EC" id="4.3.1.3" evidence="1"/>
<dbReference type="EMBL" id="CP001364">
    <property type="protein sequence ID" value="ACM52486.1"/>
    <property type="molecule type" value="Genomic_DNA"/>
</dbReference>
<dbReference type="SMR" id="B9LLY0"/>
<dbReference type="KEGG" id="chl:Chy400_1064"/>
<dbReference type="HOGENOM" id="CLU_014801_4_0_0"/>
<dbReference type="OrthoDB" id="9806955at2"/>
<dbReference type="UniPathway" id="UPA00379">
    <property type="reaction ID" value="UER00549"/>
</dbReference>
<dbReference type="GO" id="GO:0005737">
    <property type="term" value="C:cytoplasm"/>
    <property type="evidence" value="ECO:0007669"/>
    <property type="project" value="UniProtKB-SubCell"/>
</dbReference>
<dbReference type="GO" id="GO:0004397">
    <property type="term" value="F:histidine ammonia-lyase activity"/>
    <property type="evidence" value="ECO:0007669"/>
    <property type="project" value="UniProtKB-UniRule"/>
</dbReference>
<dbReference type="GO" id="GO:0019556">
    <property type="term" value="P:L-histidine catabolic process to glutamate and formamide"/>
    <property type="evidence" value="ECO:0007669"/>
    <property type="project" value="UniProtKB-UniPathway"/>
</dbReference>
<dbReference type="GO" id="GO:0019557">
    <property type="term" value="P:L-histidine catabolic process to glutamate and formate"/>
    <property type="evidence" value="ECO:0007669"/>
    <property type="project" value="UniProtKB-UniPathway"/>
</dbReference>
<dbReference type="CDD" id="cd00332">
    <property type="entry name" value="PAL-HAL"/>
    <property type="match status" value="1"/>
</dbReference>
<dbReference type="FunFam" id="1.10.275.10:FF:000005">
    <property type="entry name" value="Histidine ammonia-lyase"/>
    <property type="match status" value="1"/>
</dbReference>
<dbReference type="FunFam" id="1.20.200.10:FF:000003">
    <property type="entry name" value="Histidine ammonia-lyase"/>
    <property type="match status" value="1"/>
</dbReference>
<dbReference type="Gene3D" id="1.20.200.10">
    <property type="entry name" value="Fumarase/aspartase (Central domain)"/>
    <property type="match status" value="1"/>
</dbReference>
<dbReference type="Gene3D" id="1.10.275.10">
    <property type="entry name" value="Fumarase/aspartase (N-terminal domain)"/>
    <property type="match status" value="1"/>
</dbReference>
<dbReference type="HAMAP" id="MF_00229">
    <property type="entry name" value="His_ammonia_lyase"/>
    <property type="match status" value="1"/>
</dbReference>
<dbReference type="InterPro" id="IPR001106">
    <property type="entry name" value="Aromatic_Lyase"/>
</dbReference>
<dbReference type="InterPro" id="IPR024083">
    <property type="entry name" value="Fumarase/histidase_N"/>
</dbReference>
<dbReference type="InterPro" id="IPR005921">
    <property type="entry name" value="HutH"/>
</dbReference>
<dbReference type="InterPro" id="IPR008948">
    <property type="entry name" value="L-Aspartase-like"/>
</dbReference>
<dbReference type="InterPro" id="IPR022313">
    <property type="entry name" value="Phe/His_NH3-lyase_AS"/>
</dbReference>
<dbReference type="NCBIfam" id="TIGR01225">
    <property type="entry name" value="hutH"/>
    <property type="match status" value="1"/>
</dbReference>
<dbReference type="NCBIfam" id="NF006871">
    <property type="entry name" value="PRK09367.1"/>
    <property type="match status" value="1"/>
</dbReference>
<dbReference type="PANTHER" id="PTHR10362">
    <property type="entry name" value="HISTIDINE AMMONIA-LYASE"/>
    <property type="match status" value="1"/>
</dbReference>
<dbReference type="Pfam" id="PF00221">
    <property type="entry name" value="Lyase_aromatic"/>
    <property type="match status" value="1"/>
</dbReference>
<dbReference type="SUPFAM" id="SSF48557">
    <property type="entry name" value="L-aspartase-like"/>
    <property type="match status" value="1"/>
</dbReference>
<dbReference type="PROSITE" id="PS00488">
    <property type="entry name" value="PAL_HISTIDASE"/>
    <property type="match status" value="1"/>
</dbReference>
<gene>
    <name evidence="1" type="primary">hutH</name>
    <name type="ordered locus">Chy400_1064</name>
</gene>
<reference key="1">
    <citation type="submission" date="2009-01" db="EMBL/GenBank/DDBJ databases">
        <title>Complete sequence of Chloroflexus sp. Y-400-fl.</title>
        <authorList>
            <consortium name="US DOE Joint Genome Institute"/>
            <person name="Lucas S."/>
            <person name="Copeland A."/>
            <person name="Lapidus A."/>
            <person name="Glavina del Rio T."/>
            <person name="Dalin E."/>
            <person name="Tice H."/>
            <person name="Bruce D."/>
            <person name="Goodwin L."/>
            <person name="Pitluck S."/>
            <person name="Sims D."/>
            <person name="Kiss H."/>
            <person name="Brettin T."/>
            <person name="Detter J.C."/>
            <person name="Han C."/>
            <person name="Larimer F."/>
            <person name="Land M."/>
            <person name="Hauser L."/>
            <person name="Kyrpides N."/>
            <person name="Ovchinnikova G."/>
            <person name="Bryant D.A."/>
            <person name="Richardson P."/>
        </authorList>
    </citation>
    <scope>NUCLEOTIDE SEQUENCE [LARGE SCALE GENOMIC DNA]</scope>
    <source>
        <strain>ATCC 29364 / DSM 637 / Y-400-fl</strain>
    </source>
</reference>
<keyword id="KW-0963">Cytoplasm</keyword>
<keyword id="KW-0369">Histidine metabolism</keyword>
<keyword id="KW-0456">Lyase</keyword>
<evidence type="ECO:0000255" key="1">
    <source>
        <dbReference type="HAMAP-Rule" id="MF_00229"/>
    </source>
</evidence>
<accession>B9LLY0</accession>